<evidence type="ECO:0000255" key="1">
    <source>
        <dbReference type="HAMAP-Rule" id="MF_01849"/>
    </source>
</evidence>
<evidence type="ECO:0000255" key="2">
    <source>
        <dbReference type="PROSITE-ProRule" id="PRU01266"/>
    </source>
</evidence>
<name>RLMN_CERS5</name>
<gene>
    <name evidence="1" type="primary">rlmN</name>
    <name type="ordered locus">Rsph17025_0041</name>
</gene>
<protein>
    <recommendedName>
        <fullName evidence="1">Dual-specificity RNA methyltransferase RlmN</fullName>
        <ecNumber evidence="1">2.1.1.192</ecNumber>
    </recommendedName>
    <alternativeName>
        <fullName evidence="1">23S rRNA (adenine(2503)-C(2))-methyltransferase</fullName>
    </alternativeName>
    <alternativeName>
        <fullName evidence="1">23S rRNA m2A2503 methyltransferase</fullName>
    </alternativeName>
    <alternativeName>
        <fullName evidence="1">Ribosomal RNA large subunit methyltransferase N</fullName>
    </alternativeName>
    <alternativeName>
        <fullName evidence="1">tRNA (adenine(37)-C(2))-methyltransferase</fullName>
    </alternativeName>
    <alternativeName>
        <fullName evidence="1">tRNA m2A37 methyltransferase</fullName>
    </alternativeName>
</protein>
<proteinExistence type="inferred from homology"/>
<comment type="function">
    <text evidence="1">Specifically methylates position 2 of adenine 2503 in 23S rRNA and position 2 of adenine 37 in tRNAs. m2A2503 modification seems to play a crucial role in the proofreading step occurring at the peptidyl transferase center and thus would serve to optimize ribosomal fidelity.</text>
</comment>
<comment type="catalytic activity">
    <reaction evidence="1">
        <text>adenosine(2503) in 23S rRNA + 2 reduced [2Fe-2S]-[ferredoxin] + 2 S-adenosyl-L-methionine = 2-methyladenosine(2503) in 23S rRNA + 5'-deoxyadenosine + L-methionine + 2 oxidized [2Fe-2S]-[ferredoxin] + S-adenosyl-L-homocysteine</text>
        <dbReference type="Rhea" id="RHEA:42916"/>
        <dbReference type="Rhea" id="RHEA-COMP:10000"/>
        <dbReference type="Rhea" id="RHEA-COMP:10001"/>
        <dbReference type="Rhea" id="RHEA-COMP:10152"/>
        <dbReference type="Rhea" id="RHEA-COMP:10282"/>
        <dbReference type="ChEBI" id="CHEBI:17319"/>
        <dbReference type="ChEBI" id="CHEBI:33737"/>
        <dbReference type="ChEBI" id="CHEBI:33738"/>
        <dbReference type="ChEBI" id="CHEBI:57844"/>
        <dbReference type="ChEBI" id="CHEBI:57856"/>
        <dbReference type="ChEBI" id="CHEBI:59789"/>
        <dbReference type="ChEBI" id="CHEBI:74411"/>
        <dbReference type="ChEBI" id="CHEBI:74497"/>
        <dbReference type="EC" id="2.1.1.192"/>
    </reaction>
</comment>
<comment type="catalytic activity">
    <reaction evidence="1">
        <text>adenosine(37) in tRNA + 2 reduced [2Fe-2S]-[ferredoxin] + 2 S-adenosyl-L-methionine = 2-methyladenosine(37) in tRNA + 5'-deoxyadenosine + L-methionine + 2 oxidized [2Fe-2S]-[ferredoxin] + S-adenosyl-L-homocysteine</text>
        <dbReference type="Rhea" id="RHEA:43332"/>
        <dbReference type="Rhea" id="RHEA-COMP:10000"/>
        <dbReference type="Rhea" id="RHEA-COMP:10001"/>
        <dbReference type="Rhea" id="RHEA-COMP:10162"/>
        <dbReference type="Rhea" id="RHEA-COMP:10485"/>
        <dbReference type="ChEBI" id="CHEBI:17319"/>
        <dbReference type="ChEBI" id="CHEBI:33737"/>
        <dbReference type="ChEBI" id="CHEBI:33738"/>
        <dbReference type="ChEBI" id="CHEBI:57844"/>
        <dbReference type="ChEBI" id="CHEBI:57856"/>
        <dbReference type="ChEBI" id="CHEBI:59789"/>
        <dbReference type="ChEBI" id="CHEBI:74411"/>
        <dbReference type="ChEBI" id="CHEBI:74497"/>
        <dbReference type="EC" id="2.1.1.192"/>
    </reaction>
</comment>
<comment type="cofactor">
    <cofactor evidence="1">
        <name>[4Fe-4S] cluster</name>
        <dbReference type="ChEBI" id="CHEBI:49883"/>
    </cofactor>
    <text evidence="1">Binds 1 [4Fe-4S] cluster. The cluster is coordinated with 3 cysteines and an exchangeable S-adenosyl-L-methionine.</text>
</comment>
<comment type="subcellular location">
    <subcellularLocation>
        <location evidence="1">Cytoplasm</location>
    </subcellularLocation>
</comment>
<comment type="miscellaneous">
    <text evidence="1">Reaction proceeds by a ping-pong mechanism involving intermediate methylation of a conserved cysteine residue.</text>
</comment>
<comment type="similarity">
    <text evidence="1">Belongs to the radical SAM superfamily. RlmN family.</text>
</comment>
<dbReference type="EC" id="2.1.1.192" evidence="1"/>
<dbReference type="EMBL" id="CP000661">
    <property type="protein sequence ID" value="ABP68953.1"/>
    <property type="molecule type" value="Genomic_DNA"/>
</dbReference>
<dbReference type="SMR" id="A4WNI9"/>
<dbReference type="STRING" id="349102.Rsph17025_0041"/>
<dbReference type="KEGG" id="rsq:Rsph17025_0041"/>
<dbReference type="eggNOG" id="COG0820">
    <property type="taxonomic scope" value="Bacteria"/>
</dbReference>
<dbReference type="HOGENOM" id="CLU_029101_2_0_5"/>
<dbReference type="BioCyc" id="RSPH349102:G1G8M-41-MONOMER"/>
<dbReference type="GO" id="GO:0005737">
    <property type="term" value="C:cytoplasm"/>
    <property type="evidence" value="ECO:0007669"/>
    <property type="project" value="UniProtKB-SubCell"/>
</dbReference>
<dbReference type="GO" id="GO:0051539">
    <property type="term" value="F:4 iron, 4 sulfur cluster binding"/>
    <property type="evidence" value="ECO:0007669"/>
    <property type="project" value="UniProtKB-UniRule"/>
</dbReference>
<dbReference type="GO" id="GO:0046872">
    <property type="term" value="F:metal ion binding"/>
    <property type="evidence" value="ECO:0007669"/>
    <property type="project" value="UniProtKB-KW"/>
</dbReference>
<dbReference type="GO" id="GO:0070040">
    <property type="term" value="F:rRNA (adenine(2503)-C2-)-methyltransferase activity"/>
    <property type="evidence" value="ECO:0007669"/>
    <property type="project" value="UniProtKB-UniRule"/>
</dbReference>
<dbReference type="GO" id="GO:0019843">
    <property type="term" value="F:rRNA binding"/>
    <property type="evidence" value="ECO:0007669"/>
    <property type="project" value="UniProtKB-UniRule"/>
</dbReference>
<dbReference type="GO" id="GO:0002935">
    <property type="term" value="F:tRNA (adenine(37)-C2)-methyltransferase activity"/>
    <property type="evidence" value="ECO:0007669"/>
    <property type="project" value="UniProtKB-UniRule"/>
</dbReference>
<dbReference type="GO" id="GO:0000049">
    <property type="term" value="F:tRNA binding"/>
    <property type="evidence" value="ECO:0007669"/>
    <property type="project" value="UniProtKB-UniRule"/>
</dbReference>
<dbReference type="GO" id="GO:0070475">
    <property type="term" value="P:rRNA base methylation"/>
    <property type="evidence" value="ECO:0007669"/>
    <property type="project" value="UniProtKB-UniRule"/>
</dbReference>
<dbReference type="GO" id="GO:0030488">
    <property type="term" value="P:tRNA methylation"/>
    <property type="evidence" value="ECO:0007669"/>
    <property type="project" value="UniProtKB-UniRule"/>
</dbReference>
<dbReference type="CDD" id="cd01335">
    <property type="entry name" value="Radical_SAM"/>
    <property type="match status" value="1"/>
</dbReference>
<dbReference type="FunFam" id="3.20.20.70:FF:000008">
    <property type="entry name" value="Dual-specificity RNA methyltransferase RlmN"/>
    <property type="match status" value="1"/>
</dbReference>
<dbReference type="Gene3D" id="1.10.150.530">
    <property type="match status" value="1"/>
</dbReference>
<dbReference type="Gene3D" id="3.20.20.70">
    <property type="entry name" value="Aldolase class I"/>
    <property type="match status" value="1"/>
</dbReference>
<dbReference type="HAMAP" id="MF_01849">
    <property type="entry name" value="RNA_methyltr_RlmN"/>
    <property type="match status" value="1"/>
</dbReference>
<dbReference type="InterPro" id="IPR013785">
    <property type="entry name" value="Aldolase_TIM"/>
</dbReference>
<dbReference type="InterPro" id="IPR040072">
    <property type="entry name" value="Methyltransferase_A"/>
</dbReference>
<dbReference type="InterPro" id="IPR048641">
    <property type="entry name" value="RlmN_N"/>
</dbReference>
<dbReference type="InterPro" id="IPR027492">
    <property type="entry name" value="RNA_MTrfase_RlmN"/>
</dbReference>
<dbReference type="InterPro" id="IPR004383">
    <property type="entry name" value="rRNA_lsu_MTrfase_RlmN/Cfr"/>
</dbReference>
<dbReference type="InterPro" id="IPR007197">
    <property type="entry name" value="rSAM"/>
</dbReference>
<dbReference type="NCBIfam" id="TIGR00048">
    <property type="entry name" value="rRNA_mod_RlmN"/>
    <property type="match status" value="1"/>
</dbReference>
<dbReference type="PANTHER" id="PTHR30544">
    <property type="entry name" value="23S RRNA METHYLTRANSFERASE"/>
    <property type="match status" value="1"/>
</dbReference>
<dbReference type="PANTHER" id="PTHR30544:SF5">
    <property type="entry name" value="RADICAL SAM CORE DOMAIN-CONTAINING PROTEIN"/>
    <property type="match status" value="1"/>
</dbReference>
<dbReference type="Pfam" id="PF04055">
    <property type="entry name" value="Radical_SAM"/>
    <property type="match status" value="1"/>
</dbReference>
<dbReference type="Pfam" id="PF21016">
    <property type="entry name" value="RlmN_N"/>
    <property type="match status" value="1"/>
</dbReference>
<dbReference type="PIRSF" id="PIRSF006004">
    <property type="entry name" value="CHP00048"/>
    <property type="match status" value="1"/>
</dbReference>
<dbReference type="SFLD" id="SFLDF00275">
    <property type="entry name" value="adenosine_C2_methyltransferase"/>
    <property type="match status" value="1"/>
</dbReference>
<dbReference type="SFLD" id="SFLDG01062">
    <property type="entry name" value="methyltransferase_(Class_A)"/>
    <property type="match status" value="1"/>
</dbReference>
<dbReference type="SUPFAM" id="SSF102114">
    <property type="entry name" value="Radical SAM enzymes"/>
    <property type="match status" value="1"/>
</dbReference>
<dbReference type="PROSITE" id="PS51918">
    <property type="entry name" value="RADICAL_SAM"/>
    <property type="match status" value="1"/>
</dbReference>
<organism>
    <name type="scientific">Cereibacter sphaeroides (strain ATCC 17025 / ATH 2.4.3)</name>
    <name type="common">Rhodobacter sphaeroides</name>
    <dbReference type="NCBI Taxonomy" id="349102"/>
    <lineage>
        <taxon>Bacteria</taxon>
        <taxon>Pseudomonadati</taxon>
        <taxon>Pseudomonadota</taxon>
        <taxon>Alphaproteobacteria</taxon>
        <taxon>Rhodobacterales</taxon>
        <taxon>Paracoccaceae</taxon>
        <taxon>Cereibacter</taxon>
    </lineage>
</organism>
<sequence>MTATAPITQDVMTLPRKLPEGGPLNIVGLTREELMAALVAAGTPERQARMRMGQVWQWVYHWGVRDFAQMTNLAKDYRALLAEHFAIVLPEVVTRQISADGTRKYLIRIAGGHEVETVYIPEEGRGTLCVSSQVGCTLTCSFCHTGTQKLVRNLTAGEIVGQVMLVRDDLGEWPERGAPKDETRLVSNLVLMGMGEPLYNFENVRNAMKVVMDGEGLSLSRRRITLSTSGVVPEIARTAEEIGCQLAISFHATTDEVRDILVPINKRWNIRTLLDSLRDYPRLSNSERITFEYVMLDGINDSDADARRLVKLISGIPSKINLIPFNEWPGAPYRRSTPERIAAFADIIYKAGYASPIRTPRGEDIMAACGQLKSATERARKSRAQIAAETGL</sequence>
<accession>A4WNI9</accession>
<reference key="1">
    <citation type="submission" date="2007-04" db="EMBL/GenBank/DDBJ databases">
        <title>Complete sequence of chromosome of Rhodobacter sphaeroides ATCC 17025.</title>
        <authorList>
            <consortium name="US DOE Joint Genome Institute"/>
            <person name="Copeland A."/>
            <person name="Lucas S."/>
            <person name="Lapidus A."/>
            <person name="Barry K."/>
            <person name="Detter J.C."/>
            <person name="Glavina del Rio T."/>
            <person name="Hammon N."/>
            <person name="Israni S."/>
            <person name="Dalin E."/>
            <person name="Tice H."/>
            <person name="Pitluck S."/>
            <person name="Chertkov O."/>
            <person name="Brettin T."/>
            <person name="Bruce D."/>
            <person name="Han C."/>
            <person name="Schmutz J."/>
            <person name="Larimer F."/>
            <person name="Land M."/>
            <person name="Hauser L."/>
            <person name="Kyrpides N."/>
            <person name="Kim E."/>
            <person name="Richardson P."/>
            <person name="Mackenzie C."/>
            <person name="Choudhary M."/>
            <person name="Donohue T.J."/>
            <person name="Kaplan S."/>
        </authorList>
    </citation>
    <scope>NUCLEOTIDE SEQUENCE [LARGE SCALE GENOMIC DNA]</scope>
    <source>
        <strain>ATCC 17025 / ATH 2.4.3</strain>
    </source>
</reference>
<feature type="chain" id="PRO_0000350362" description="Dual-specificity RNA methyltransferase RlmN">
    <location>
        <begin position="1"/>
        <end position="392"/>
    </location>
</feature>
<feature type="domain" description="Radical SAM core" evidence="2">
    <location>
        <begin position="122"/>
        <end position="364"/>
    </location>
</feature>
<feature type="active site" description="Proton acceptor" evidence="1">
    <location>
        <position position="116"/>
    </location>
</feature>
<feature type="active site" description="S-methylcysteine intermediate" evidence="1">
    <location>
        <position position="369"/>
    </location>
</feature>
<feature type="binding site" evidence="1">
    <location>
        <position position="136"/>
    </location>
    <ligand>
        <name>[4Fe-4S] cluster</name>
        <dbReference type="ChEBI" id="CHEBI:49883"/>
        <note>4Fe-4S-S-AdoMet</note>
    </ligand>
</feature>
<feature type="binding site" evidence="1">
    <location>
        <position position="140"/>
    </location>
    <ligand>
        <name>[4Fe-4S] cluster</name>
        <dbReference type="ChEBI" id="CHEBI:49883"/>
        <note>4Fe-4S-S-AdoMet</note>
    </ligand>
</feature>
<feature type="binding site" evidence="1">
    <location>
        <position position="143"/>
    </location>
    <ligand>
        <name>[4Fe-4S] cluster</name>
        <dbReference type="ChEBI" id="CHEBI:49883"/>
        <note>4Fe-4S-S-AdoMet</note>
    </ligand>
</feature>
<feature type="binding site" evidence="1">
    <location>
        <begin position="195"/>
        <end position="196"/>
    </location>
    <ligand>
        <name>S-adenosyl-L-methionine</name>
        <dbReference type="ChEBI" id="CHEBI:59789"/>
    </ligand>
</feature>
<feature type="binding site" evidence="1">
    <location>
        <position position="227"/>
    </location>
    <ligand>
        <name>S-adenosyl-L-methionine</name>
        <dbReference type="ChEBI" id="CHEBI:59789"/>
    </ligand>
</feature>
<feature type="binding site" evidence="1">
    <location>
        <begin position="249"/>
        <end position="251"/>
    </location>
    <ligand>
        <name>S-adenosyl-L-methionine</name>
        <dbReference type="ChEBI" id="CHEBI:59789"/>
    </ligand>
</feature>
<feature type="binding site" evidence="1">
    <location>
        <position position="326"/>
    </location>
    <ligand>
        <name>S-adenosyl-L-methionine</name>
        <dbReference type="ChEBI" id="CHEBI:59789"/>
    </ligand>
</feature>
<feature type="disulfide bond" description="(transient)" evidence="1">
    <location>
        <begin position="129"/>
        <end position="369"/>
    </location>
</feature>
<keyword id="KW-0004">4Fe-4S</keyword>
<keyword id="KW-0963">Cytoplasm</keyword>
<keyword id="KW-1015">Disulfide bond</keyword>
<keyword id="KW-0408">Iron</keyword>
<keyword id="KW-0411">Iron-sulfur</keyword>
<keyword id="KW-0479">Metal-binding</keyword>
<keyword id="KW-0489">Methyltransferase</keyword>
<keyword id="KW-0698">rRNA processing</keyword>
<keyword id="KW-0949">S-adenosyl-L-methionine</keyword>
<keyword id="KW-0808">Transferase</keyword>
<keyword id="KW-0819">tRNA processing</keyword>